<evidence type="ECO:0000255" key="1">
    <source>
        <dbReference type="HAMAP-Rule" id="MF_01021"/>
    </source>
</evidence>
<protein>
    <recommendedName>
        <fullName evidence="1">Phosphoribosyl-AMP cyclohydrolase</fullName>
        <shortName evidence="1">PRA-CH</shortName>
        <ecNumber evidence="1">3.5.4.19</ecNumber>
    </recommendedName>
</protein>
<name>HIS3_RHOPB</name>
<organism>
    <name type="scientific">Rhodopseudomonas palustris (strain BisB18)</name>
    <dbReference type="NCBI Taxonomy" id="316056"/>
    <lineage>
        <taxon>Bacteria</taxon>
        <taxon>Pseudomonadati</taxon>
        <taxon>Pseudomonadota</taxon>
        <taxon>Alphaproteobacteria</taxon>
        <taxon>Hyphomicrobiales</taxon>
        <taxon>Nitrobacteraceae</taxon>
        <taxon>Rhodopseudomonas</taxon>
    </lineage>
</organism>
<sequence>MSAPTTPAAALDDVEEGVVLRPKFDAAGLVTCVTTDAQSGDVLMVAFMNDEALKKTIDSGEAWYFSRSRGRLWRKGESSGHVQRVLEIRVDCDQDAVWIKVEQGGGAACHTGRKSCFYRRVDRDAEGAPLLSPVDAERLFDPAKVYR</sequence>
<gene>
    <name evidence="1" type="primary">hisI</name>
    <name type="ordered locus">RPC_3113</name>
</gene>
<dbReference type="EC" id="3.5.4.19" evidence="1"/>
<dbReference type="EMBL" id="CP000301">
    <property type="protein sequence ID" value="ABD88655.1"/>
    <property type="molecule type" value="Genomic_DNA"/>
</dbReference>
<dbReference type="SMR" id="Q212N1"/>
<dbReference type="STRING" id="316056.RPC_3113"/>
<dbReference type="KEGG" id="rpc:RPC_3113"/>
<dbReference type="eggNOG" id="COG0139">
    <property type="taxonomic scope" value="Bacteria"/>
</dbReference>
<dbReference type="HOGENOM" id="CLU_048577_5_0_5"/>
<dbReference type="OrthoDB" id="9795769at2"/>
<dbReference type="UniPathway" id="UPA00031">
    <property type="reaction ID" value="UER00008"/>
</dbReference>
<dbReference type="GO" id="GO:0005737">
    <property type="term" value="C:cytoplasm"/>
    <property type="evidence" value="ECO:0007669"/>
    <property type="project" value="UniProtKB-SubCell"/>
</dbReference>
<dbReference type="GO" id="GO:0000287">
    <property type="term" value="F:magnesium ion binding"/>
    <property type="evidence" value="ECO:0007669"/>
    <property type="project" value="UniProtKB-UniRule"/>
</dbReference>
<dbReference type="GO" id="GO:0004635">
    <property type="term" value="F:phosphoribosyl-AMP cyclohydrolase activity"/>
    <property type="evidence" value="ECO:0007669"/>
    <property type="project" value="UniProtKB-UniRule"/>
</dbReference>
<dbReference type="GO" id="GO:0008270">
    <property type="term" value="F:zinc ion binding"/>
    <property type="evidence" value="ECO:0007669"/>
    <property type="project" value="UniProtKB-UniRule"/>
</dbReference>
<dbReference type="GO" id="GO:0000105">
    <property type="term" value="P:L-histidine biosynthetic process"/>
    <property type="evidence" value="ECO:0007669"/>
    <property type="project" value="UniProtKB-UniRule"/>
</dbReference>
<dbReference type="FunFam" id="3.10.20.810:FF:000001">
    <property type="entry name" value="Histidine biosynthesis bifunctional protein HisIE"/>
    <property type="match status" value="1"/>
</dbReference>
<dbReference type="Gene3D" id="3.10.20.810">
    <property type="entry name" value="Phosphoribosyl-AMP cyclohydrolase"/>
    <property type="match status" value="1"/>
</dbReference>
<dbReference type="HAMAP" id="MF_01021">
    <property type="entry name" value="HisI"/>
    <property type="match status" value="1"/>
</dbReference>
<dbReference type="InterPro" id="IPR026660">
    <property type="entry name" value="PRA-CH"/>
</dbReference>
<dbReference type="InterPro" id="IPR002496">
    <property type="entry name" value="PRib_AMP_CycHydrolase_dom"/>
</dbReference>
<dbReference type="InterPro" id="IPR038019">
    <property type="entry name" value="PRib_AMP_CycHydrolase_sf"/>
</dbReference>
<dbReference type="NCBIfam" id="NF000768">
    <property type="entry name" value="PRK00051.1"/>
    <property type="match status" value="1"/>
</dbReference>
<dbReference type="PANTHER" id="PTHR42945">
    <property type="entry name" value="HISTIDINE BIOSYNTHESIS BIFUNCTIONAL PROTEIN"/>
    <property type="match status" value="1"/>
</dbReference>
<dbReference type="PANTHER" id="PTHR42945:SF1">
    <property type="entry name" value="HISTIDINE BIOSYNTHESIS BIFUNCTIONAL PROTEIN HIS7"/>
    <property type="match status" value="1"/>
</dbReference>
<dbReference type="Pfam" id="PF01502">
    <property type="entry name" value="PRA-CH"/>
    <property type="match status" value="1"/>
</dbReference>
<dbReference type="SUPFAM" id="SSF141734">
    <property type="entry name" value="HisI-like"/>
    <property type="match status" value="1"/>
</dbReference>
<accession>Q212N1</accession>
<feature type="chain" id="PRO_0000319711" description="Phosphoribosyl-AMP cyclohydrolase">
    <location>
        <begin position="1"/>
        <end position="147"/>
    </location>
</feature>
<feature type="binding site" evidence="1">
    <location>
        <position position="91"/>
    </location>
    <ligand>
        <name>Mg(2+)</name>
        <dbReference type="ChEBI" id="CHEBI:18420"/>
    </ligand>
</feature>
<feature type="binding site" evidence="1">
    <location>
        <position position="92"/>
    </location>
    <ligand>
        <name>Zn(2+)</name>
        <dbReference type="ChEBI" id="CHEBI:29105"/>
        <note>ligand shared between dimeric partners</note>
    </ligand>
</feature>
<feature type="binding site" evidence="1">
    <location>
        <position position="93"/>
    </location>
    <ligand>
        <name>Mg(2+)</name>
        <dbReference type="ChEBI" id="CHEBI:18420"/>
    </ligand>
</feature>
<feature type="binding site" evidence="1">
    <location>
        <position position="95"/>
    </location>
    <ligand>
        <name>Mg(2+)</name>
        <dbReference type="ChEBI" id="CHEBI:18420"/>
    </ligand>
</feature>
<feature type="binding site" evidence="1">
    <location>
        <position position="109"/>
    </location>
    <ligand>
        <name>Zn(2+)</name>
        <dbReference type="ChEBI" id="CHEBI:29105"/>
        <note>ligand shared between dimeric partners</note>
    </ligand>
</feature>
<feature type="binding site" evidence="1">
    <location>
        <position position="116"/>
    </location>
    <ligand>
        <name>Zn(2+)</name>
        <dbReference type="ChEBI" id="CHEBI:29105"/>
        <note>ligand shared between dimeric partners</note>
    </ligand>
</feature>
<reference key="1">
    <citation type="submission" date="2006-03" db="EMBL/GenBank/DDBJ databases">
        <title>Complete sequence of Rhodopseudomonas palustris BisB18.</title>
        <authorList>
            <consortium name="US DOE Joint Genome Institute"/>
            <person name="Copeland A."/>
            <person name="Lucas S."/>
            <person name="Lapidus A."/>
            <person name="Barry K."/>
            <person name="Detter J.C."/>
            <person name="Glavina del Rio T."/>
            <person name="Hammon N."/>
            <person name="Israni S."/>
            <person name="Dalin E."/>
            <person name="Tice H."/>
            <person name="Pitluck S."/>
            <person name="Chain P."/>
            <person name="Malfatti S."/>
            <person name="Shin M."/>
            <person name="Vergez L."/>
            <person name="Schmutz J."/>
            <person name="Larimer F."/>
            <person name="Land M."/>
            <person name="Hauser L."/>
            <person name="Pelletier D.A."/>
            <person name="Kyrpides N."/>
            <person name="Anderson I."/>
            <person name="Oda Y."/>
            <person name="Harwood C.S."/>
            <person name="Richardson P."/>
        </authorList>
    </citation>
    <scope>NUCLEOTIDE SEQUENCE [LARGE SCALE GENOMIC DNA]</scope>
    <source>
        <strain>BisB18</strain>
    </source>
</reference>
<proteinExistence type="inferred from homology"/>
<keyword id="KW-0028">Amino-acid biosynthesis</keyword>
<keyword id="KW-0963">Cytoplasm</keyword>
<keyword id="KW-0368">Histidine biosynthesis</keyword>
<keyword id="KW-0378">Hydrolase</keyword>
<keyword id="KW-0460">Magnesium</keyword>
<keyword id="KW-0479">Metal-binding</keyword>
<keyword id="KW-0862">Zinc</keyword>
<comment type="function">
    <text evidence="1">Catalyzes the hydrolysis of the adenine ring of phosphoribosyl-AMP.</text>
</comment>
<comment type="catalytic activity">
    <reaction evidence="1">
        <text>1-(5-phospho-beta-D-ribosyl)-5'-AMP + H2O = 1-(5-phospho-beta-D-ribosyl)-5-[(5-phospho-beta-D-ribosylamino)methylideneamino]imidazole-4-carboxamide</text>
        <dbReference type="Rhea" id="RHEA:20049"/>
        <dbReference type="ChEBI" id="CHEBI:15377"/>
        <dbReference type="ChEBI" id="CHEBI:58435"/>
        <dbReference type="ChEBI" id="CHEBI:59457"/>
        <dbReference type="EC" id="3.5.4.19"/>
    </reaction>
</comment>
<comment type="cofactor">
    <cofactor evidence="1">
        <name>Mg(2+)</name>
        <dbReference type="ChEBI" id="CHEBI:18420"/>
    </cofactor>
    <text evidence="1">Binds 1 Mg(2+) ion per subunit.</text>
</comment>
<comment type="cofactor">
    <cofactor evidence="1">
        <name>Zn(2+)</name>
        <dbReference type="ChEBI" id="CHEBI:29105"/>
    </cofactor>
    <text evidence="1">Binds 1 zinc ion per subunit.</text>
</comment>
<comment type="pathway">
    <text evidence="1">Amino-acid biosynthesis; L-histidine biosynthesis; L-histidine from 5-phospho-alpha-D-ribose 1-diphosphate: step 3/9.</text>
</comment>
<comment type="subunit">
    <text evidence="1">Homodimer.</text>
</comment>
<comment type="subcellular location">
    <subcellularLocation>
        <location evidence="1">Cytoplasm</location>
    </subcellularLocation>
</comment>
<comment type="similarity">
    <text evidence="1">Belongs to the PRA-CH family.</text>
</comment>